<accession>Q8WV41</accession>
<accession>B1NM17</accession>
<dbReference type="EMBL" id="EF219141">
    <property type="protein sequence ID" value="ABN09670.1"/>
    <property type="molecule type" value="mRNA"/>
</dbReference>
<dbReference type="EMBL" id="EF653821">
    <property type="protein sequence ID" value="ABV26009.1"/>
    <property type="molecule type" value="mRNA"/>
</dbReference>
<dbReference type="EMBL" id="AL833039">
    <property type="protein sequence ID" value="CAH56299.1"/>
    <property type="molecule type" value="mRNA"/>
</dbReference>
<dbReference type="EMBL" id="CH471136">
    <property type="protein sequence ID" value="EAW99243.1"/>
    <property type="molecule type" value="Genomic_DNA"/>
</dbReference>
<dbReference type="EMBL" id="BC018775">
    <property type="protein sequence ID" value="AAH18775.1"/>
    <property type="molecule type" value="mRNA"/>
</dbReference>
<dbReference type="CCDS" id="CCDS10283.1"/>
<dbReference type="RefSeq" id="NP_001305075.1">
    <property type="nucleotide sequence ID" value="NM_001318146.1"/>
</dbReference>
<dbReference type="RefSeq" id="NP_695003.1">
    <property type="nucleotide sequence ID" value="NM_153271.2"/>
</dbReference>
<dbReference type="PDB" id="4AKV">
    <property type="method" value="X-ray"/>
    <property type="resolution" value="2.65 A"/>
    <property type="chains" value="A/B=212-574"/>
</dbReference>
<dbReference type="PDBsum" id="4AKV"/>
<dbReference type="SMR" id="Q8WV41"/>
<dbReference type="BioGRID" id="129214">
    <property type="interactions" value="71"/>
</dbReference>
<dbReference type="FunCoup" id="Q8WV41">
    <property type="interactions" value="1119"/>
</dbReference>
<dbReference type="IntAct" id="Q8WV41">
    <property type="interactions" value="71"/>
</dbReference>
<dbReference type="MINT" id="Q8WV41"/>
<dbReference type="STRING" id="9606.ENSP00000311427"/>
<dbReference type="TCDB" id="3.A.34.1.1">
    <property type="family name" value="the sorting nexins of the escrt complexes (sn-escrt)"/>
</dbReference>
<dbReference type="iPTMnet" id="Q8WV41"/>
<dbReference type="PhosphoSitePlus" id="Q8WV41"/>
<dbReference type="BioMuta" id="SNX33"/>
<dbReference type="DMDM" id="74751538"/>
<dbReference type="jPOST" id="Q8WV41"/>
<dbReference type="MassIVE" id="Q8WV41"/>
<dbReference type="PaxDb" id="9606-ENSP00000311427"/>
<dbReference type="PeptideAtlas" id="Q8WV41"/>
<dbReference type="ProteomicsDB" id="74746"/>
<dbReference type="Pumba" id="Q8WV41"/>
<dbReference type="Antibodypedia" id="27355">
    <property type="antibodies" value="133 antibodies from 24 providers"/>
</dbReference>
<dbReference type="DNASU" id="257364"/>
<dbReference type="Ensembl" id="ENST00000308527.6">
    <property type="protein sequence ID" value="ENSP00000311427.6"/>
    <property type="gene ID" value="ENSG00000173548.9"/>
</dbReference>
<dbReference type="GeneID" id="257364"/>
<dbReference type="KEGG" id="hsa:257364"/>
<dbReference type="MANE-Select" id="ENST00000308527.6">
    <property type="protein sequence ID" value="ENSP00000311427.6"/>
    <property type="RefSeq nucleotide sequence ID" value="NM_153271.2"/>
    <property type="RefSeq protein sequence ID" value="NP_695003.1"/>
</dbReference>
<dbReference type="UCSC" id="uc002bau.4">
    <property type="organism name" value="human"/>
</dbReference>
<dbReference type="AGR" id="HGNC:28468"/>
<dbReference type="CTD" id="257364"/>
<dbReference type="GeneCards" id="SNX33"/>
<dbReference type="HGNC" id="HGNC:28468">
    <property type="gene designation" value="SNX33"/>
</dbReference>
<dbReference type="HPA" id="ENSG00000173548">
    <property type="expression patterns" value="Low tissue specificity"/>
</dbReference>
<dbReference type="MIM" id="619107">
    <property type="type" value="gene"/>
</dbReference>
<dbReference type="neXtProt" id="NX_Q8WV41"/>
<dbReference type="OpenTargets" id="ENSG00000173548"/>
<dbReference type="PharmGKB" id="PA162404345"/>
<dbReference type="VEuPathDB" id="HostDB:ENSG00000173548"/>
<dbReference type="eggNOG" id="KOG2528">
    <property type="taxonomic scope" value="Eukaryota"/>
</dbReference>
<dbReference type="GeneTree" id="ENSGT00940000160162"/>
<dbReference type="HOGENOM" id="CLU_021494_3_0_1"/>
<dbReference type="InParanoid" id="Q8WV41"/>
<dbReference type="OMA" id="QAFQMDP"/>
<dbReference type="OrthoDB" id="10254720at2759"/>
<dbReference type="PAN-GO" id="Q8WV41">
    <property type="GO annotations" value="7 GO annotations based on evolutionary models"/>
</dbReference>
<dbReference type="PhylomeDB" id="Q8WV41"/>
<dbReference type="TreeFam" id="TF314082"/>
<dbReference type="PathwayCommons" id="Q8WV41"/>
<dbReference type="SignaLink" id="Q8WV41"/>
<dbReference type="BioGRID-ORCS" id="257364">
    <property type="hits" value="19 hits in 1152 CRISPR screens"/>
</dbReference>
<dbReference type="ChiTaRS" id="SNX33">
    <property type="organism name" value="human"/>
</dbReference>
<dbReference type="EvolutionaryTrace" id="Q8WV41"/>
<dbReference type="GenomeRNAi" id="257364"/>
<dbReference type="Pharos" id="Q8WV41">
    <property type="development level" value="Tbio"/>
</dbReference>
<dbReference type="PRO" id="PR:Q8WV41"/>
<dbReference type="Proteomes" id="UP000005640">
    <property type="component" value="Chromosome 15"/>
</dbReference>
<dbReference type="RNAct" id="Q8WV41">
    <property type="molecule type" value="protein"/>
</dbReference>
<dbReference type="Bgee" id="ENSG00000173548">
    <property type="expression patterns" value="Expressed in pancreatic ductal cell and 176 other cell types or tissues"/>
</dbReference>
<dbReference type="ExpressionAtlas" id="Q8WV41">
    <property type="expression patterns" value="baseline and differential"/>
</dbReference>
<dbReference type="GO" id="GO:0031410">
    <property type="term" value="C:cytoplasmic vesicle"/>
    <property type="evidence" value="ECO:0000314"/>
    <property type="project" value="UniProtKB"/>
</dbReference>
<dbReference type="GO" id="GO:0030659">
    <property type="term" value="C:cytoplasmic vesicle membrane"/>
    <property type="evidence" value="ECO:0007669"/>
    <property type="project" value="UniProtKB-SubCell"/>
</dbReference>
<dbReference type="GO" id="GO:0005829">
    <property type="term" value="C:cytosol"/>
    <property type="evidence" value="ECO:0000314"/>
    <property type="project" value="UniProtKB"/>
</dbReference>
<dbReference type="GO" id="GO:0016020">
    <property type="term" value="C:membrane"/>
    <property type="evidence" value="ECO:0000314"/>
    <property type="project" value="UniProtKB"/>
</dbReference>
<dbReference type="GO" id="GO:0005886">
    <property type="term" value="C:plasma membrane"/>
    <property type="evidence" value="ECO:0000318"/>
    <property type="project" value="GO_Central"/>
</dbReference>
<dbReference type="GO" id="GO:0042802">
    <property type="term" value="F:identical protein binding"/>
    <property type="evidence" value="ECO:0000353"/>
    <property type="project" value="IntAct"/>
</dbReference>
<dbReference type="GO" id="GO:0035091">
    <property type="term" value="F:phosphatidylinositol binding"/>
    <property type="evidence" value="ECO:0000318"/>
    <property type="project" value="GO_Central"/>
</dbReference>
<dbReference type="GO" id="GO:0036089">
    <property type="term" value="P:cleavage furrow formation"/>
    <property type="evidence" value="ECO:0000315"/>
    <property type="project" value="UniProtKB"/>
</dbReference>
<dbReference type="GO" id="GO:0006897">
    <property type="term" value="P:endocytosis"/>
    <property type="evidence" value="ECO:0000315"/>
    <property type="project" value="UniProtKB"/>
</dbReference>
<dbReference type="GO" id="GO:0016197">
    <property type="term" value="P:endosomal transport"/>
    <property type="evidence" value="ECO:0000315"/>
    <property type="project" value="UniProtKB"/>
</dbReference>
<dbReference type="GO" id="GO:0007032">
    <property type="term" value="P:endosome organization"/>
    <property type="evidence" value="ECO:0000315"/>
    <property type="project" value="UniProtKB"/>
</dbReference>
<dbReference type="GO" id="GO:0006886">
    <property type="term" value="P:intracellular protein transport"/>
    <property type="evidence" value="ECO:0007669"/>
    <property type="project" value="InterPro"/>
</dbReference>
<dbReference type="GO" id="GO:0044351">
    <property type="term" value="P:macropinocytosis"/>
    <property type="evidence" value="ECO:0000315"/>
    <property type="project" value="UniProtKB"/>
</dbReference>
<dbReference type="GO" id="GO:0000281">
    <property type="term" value="P:mitotic cytokinesis"/>
    <property type="evidence" value="ECO:0000315"/>
    <property type="project" value="UniProtKB"/>
</dbReference>
<dbReference type="GO" id="GO:0045806">
    <property type="term" value="P:negative regulation of endocytosis"/>
    <property type="evidence" value="ECO:0000314"/>
    <property type="project" value="UniProtKB"/>
</dbReference>
<dbReference type="GO" id="GO:2000009">
    <property type="term" value="P:negative regulation of protein localization to cell surface"/>
    <property type="evidence" value="ECO:0000314"/>
    <property type="project" value="UniProtKB"/>
</dbReference>
<dbReference type="GO" id="GO:0097320">
    <property type="term" value="P:plasma membrane tubulation"/>
    <property type="evidence" value="ECO:0000314"/>
    <property type="project" value="UniProtKB"/>
</dbReference>
<dbReference type="GO" id="GO:0051044">
    <property type="term" value="P:positive regulation of membrane protein ectodomain proteolysis"/>
    <property type="evidence" value="ECO:0000314"/>
    <property type="project" value="UniProtKB"/>
</dbReference>
<dbReference type="GO" id="GO:2000010">
    <property type="term" value="P:positive regulation of protein localization to cell surface"/>
    <property type="evidence" value="ECO:0000314"/>
    <property type="project" value="UniProtKB"/>
</dbReference>
<dbReference type="GO" id="GO:0017038">
    <property type="term" value="P:protein import"/>
    <property type="evidence" value="ECO:0000314"/>
    <property type="project" value="UniProtKB"/>
</dbReference>
<dbReference type="CDD" id="cd07669">
    <property type="entry name" value="BAR_SNX33"/>
    <property type="match status" value="1"/>
</dbReference>
<dbReference type="CDD" id="cd11896">
    <property type="entry name" value="SH3_SNX33"/>
    <property type="match status" value="1"/>
</dbReference>
<dbReference type="FunFam" id="1.20.1270.60:FF:000033">
    <property type="entry name" value="Sorting nexin"/>
    <property type="match status" value="1"/>
</dbReference>
<dbReference type="FunFam" id="2.30.30.40:FF:000116">
    <property type="entry name" value="Sorting nexin"/>
    <property type="match status" value="1"/>
</dbReference>
<dbReference type="FunFam" id="3.30.1520.10:FF:000004">
    <property type="entry name" value="Sorting nexin"/>
    <property type="match status" value="1"/>
</dbReference>
<dbReference type="Gene3D" id="1.20.1270.60">
    <property type="entry name" value="Arfaptin homology (AH) domain/BAR domain"/>
    <property type="match status" value="1"/>
</dbReference>
<dbReference type="Gene3D" id="3.30.1520.10">
    <property type="entry name" value="Phox-like domain"/>
    <property type="match status" value="1"/>
</dbReference>
<dbReference type="Gene3D" id="2.30.30.40">
    <property type="entry name" value="SH3 Domains"/>
    <property type="match status" value="1"/>
</dbReference>
<dbReference type="InterPro" id="IPR027267">
    <property type="entry name" value="AH/BAR_dom_sf"/>
</dbReference>
<dbReference type="InterPro" id="IPR001683">
    <property type="entry name" value="PX_dom"/>
</dbReference>
<dbReference type="InterPro" id="IPR036871">
    <property type="entry name" value="PX_dom_sf"/>
</dbReference>
<dbReference type="InterPro" id="IPR036028">
    <property type="entry name" value="SH3-like_dom_sf"/>
</dbReference>
<dbReference type="InterPro" id="IPR001452">
    <property type="entry name" value="SH3_domain"/>
</dbReference>
<dbReference type="InterPro" id="IPR037427">
    <property type="entry name" value="SNX33_BAR"/>
</dbReference>
<dbReference type="InterPro" id="IPR014536">
    <property type="entry name" value="Snx9_fam"/>
</dbReference>
<dbReference type="InterPro" id="IPR019497">
    <property type="entry name" value="Sorting_nexin_WASP-bd-dom"/>
</dbReference>
<dbReference type="PANTHER" id="PTHR45827">
    <property type="entry name" value="SORTING NEXIN"/>
    <property type="match status" value="1"/>
</dbReference>
<dbReference type="PANTHER" id="PTHR45827:SF3">
    <property type="entry name" value="SORTING NEXIN-33"/>
    <property type="match status" value="1"/>
</dbReference>
<dbReference type="Pfam" id="PF10456">
    <property type="entry name" value="BAR_3_WASP_bdg"/>
    <property type="match status" value="1"/>
</dbReference>
<dbReference type="Pfam" id="PF00787">
    <property type="entry name" value="PX"/>
    <property type="match status" value="1"/>
</dbReference>
<dbReference type="Pfam" id="PF14604">
    <property type="entry name" value="SH3_9"/>
    <property type="match status" value="1"/>
</dbReference>
<dbReference type="PIRSF" id="PIRSF027744">
    <property type="entry name" value="Snx9"/>
    <property type="match status" value="1"/>
</dbReference>
<dbReference type="SMART" id="SM00312">
    <property type="entry name" value="PX"/>
    <property type="match status" value="1"/>
</dbReference>
<dbReference type="SMART" id="SM00326">
    <property type="entry name" value="SH3"/>
    <property type="match status" value="1"/>
</dbReference>
<dbReference type="SUPFAM" id="SSF64268">
    <property type="entry name" value="PX domain"/>
    <property type="match status" value="1"/>
</dbReference>
<dbReference type="SUPFAM" id="SSF50044">
    <property type="entry name" value="SH3-domain"/>
    <property type="match status" value="1"/>
</dbReference>
<dbReference type="PROSITE" id="PS50195">
    <property type="entry name" value="PX"/>
    <property type="match status" value="1"/>
</dbReference>
<dbReference type="PROSITE" id="PS50002">
    <property type="entry name" value="SH3"/>
    <property type="match status" value="1"/>
</dbReference>
<reference key="1">
    <citation type="journal article" date="2006" name="EMBO Rep.">
        <title>Identification of preferred protein interactions by phage-display of the human Src homology-3 proteome.</title>
        <authorList>
            <person name="Kaerkkaeinen S."/>
            <person name="Hiipakka M."/>
            <person name="Wang J.-H."/>
            <person name="Kleino I."/>
            <person name="Vaehae-Jaakkola M."/>
            <person name="Renkema G.H."/>
            <person name="Liss M."/>
            <person name="Wagner R."/>
            <person name="Saksela K."/>
        </authorList>
    </citation>
    <scope>NUCLEOTIDE SEQUENCE [MRNA]</scope>
    <scope>INTERACTION WITH ADAM15</scope>
</reference>
<reference key="2">
    <citation type="journal article" date="2008" name="J. Biol. Chem.">
        <title>A novel sorting nexin modulates endocytic trafficking and alpha-secretase cleavage of the amyloid precursor protein.</title>
        <authorList>
            <person name="Schobel S."/>
            <person name="Neumann S."/>
            <person name="Hertweck M."/>
            <person name="Dislich B."/>
            <person name="Kuhn P.H."/>
            <person name="Kremmer E."/>
            <person name="Seed B."/>
            <person name="Baumeister R."/>
            <person name="Haass C."/>
            <person name="Lichtenthaler S.F."/>
        </authorList>
    </citation>
    <scope>NUCLEOTIDE SEQUENCE [MRNA]</scope>
    <scope>FUNCTION</scope>
    <scope>INTERACTION WITH DNM1 AND DNM2</scope>
    <scope>SUBCELLULAR LOCATION</scope>
    <scope>PHOSPHORYLATION</scope>
    <scope>TISSUE SPECIFICITY</scope>
    <source>
        <tissue>Brain</tissue>
    </source>
</reference>
<reference key="3">
    <citation type="journal article" date="2007" name="BMC Genomics">
        <title>The full-ORF clone resource of the German cDNA consortium.</title>
        <authorList>
            <person name="Bechtel S."/>
            <person name="Rosenfelder H."/>
            <person name="Duda A."/>
            <person name="Schmidt C.P."/>
            <person name="Ernst U."/>
            <person name="Wellenreuther R."/>
            <person name="Mehrle A."/>
            <person name="Schuster C."/>
            <person name="Bahr A."/>
            <person name="Bloecker H."/>
            <person name="Heubner D."/>
            <person name="Hoerlein A."/>
            <person name="Michel G."/>
            <person name="Wedler H."/>
            <person name="Koehrer K."/>
            <person name="Ottenwaelder B."/>
            <person name="Poustka A."/>
            <person name="Wiemann S."/>
            <person name="Schupp I."/>
        </authorList>
    </citation>
    <scope>NUCLEOTIDE SEQUENCE [LARGE SCALE MRNA]</scope>
    <source>
        <tissue>Stomach</tissue>
    </source>
</reference>
<reference key="4">
    <citation type="submission" date="2005-09" db="EMBL/GenBank/DDBJ databases">
        <authorList>
            <person name="Mural R.J."/>
            <person name="Istrail S."/>
            <person name="Sutton G.G."/>
            <person name="Florea L."/>
            <person name="Halpern A.L."/>
            <person name="Mobarry C.M."/>
            <person name="Lippert R."/>
            <person name="Walenz B."/>
            <person name="Shatkay H."/>
            <person name="Dew I."/>
            <person name="Miller J.R."/>
            <person name="Flanigan M.J."/>
            <person name="Edwards N.J."/>
            <person name="Bolanos R."/>
            <person name="Fasulo D."/>
            <person name="Halldorsson B.V."/>
            <person name="Hannenhalli S."/>
            <person name="Turner R."/>
            <person name="Yooseph S."/>
            <person name="Lu F."/>
            <person name="Nusskern D.R."/>
            <person name="Shue B.C."/>
            <person name="Zheng X.H."/>
            <person name="Zhong F."/>
            <person name="Delcher A.L."/>
            <person name="Huson D.H."/>
            <person name="Kravitz S.A."/>
            <person name="Mouchard L."/>
            <person name="Reinert K."/>
            <person name="Remington K.A."/>
            <person name="Clark A.G."/>
            <person name="Waterman M.S."/>
            <person name="Eichler E.E."/>
            <person name="Adams M.D."/>
            <person name="Hunkapiller M.W."/>
            <person name="Myers E.W."/>
            <person name="Venter J.C."/>
        </authorList>
    </citation>
    <scope>NUCLEOTIDE SEQUENCE [LARGE SCALE GENOMIC DNA]</scope>
</reference>
<reference key="5">
    <citation type="journal article" date="2004" name="Genome Res.">
        <title>The status, quality, and expansion of the NIH full-length cDNA project: the Mammalian Gene Collection (MGC).</title>
        <authorList>
            <consortium name="The MGC Project Team"/>
        </authorList>
    </citation>
    <scope>NUCLEOTIDE SEQUENCE [LARGE SCALE MRNA]</scope>
    <source>
        <tissue>Skin</tissue>
    </source>
</reference>
<reference key="6">
    <citation type="journal article" date="2008" name="Proc. Natl. Acad. Sci. U.S.A.">
        <title>A quantitative atlas of mitotic phosphorylation.</title>
        <authorList>
            <person name="Dephoure N."/>
            <person name="Zhou C."/>
            <person name="Villen J."/>
            <person name="Beausoleil S.A."/>
            <person name="Bakalarski C.E."/>
            <person name="Elledge S.J."/>
            <person name="Gygi S.P."/>
        </authorList>
    </citation>
    <scope>PHOSPHORYLATION [LARGE SCALE ANALYSIS] AT SER-77</scope>
    <scope>IDENTIFICATION BY MASS SPECTROMETRY [LARGE SCALE ANALYSIS]</scope>
    <source>
        <tissue>Cervix carcinoma</tissue>
    </source>
</reference>
<reference key="7">
    <citation type="journal article" date="2008" name="Traffic">
        <title>The novel sorting nexin SNX33 interferes with cellular PrP formation by modulation of PrP shedding.</title>
        <authorList>
            <person name="Heiseke A."/>
            <person name="Schobel S."/>
            <person name="Lichtenthaler S.F."/>
            <person name="Vorberg I."/>
            <person name="Groschup M.H."/>
            <person name="Kretzschmar H."/>
            <person name="Schatzl H.M."/>
            <person name="Nunziante M."/>
        </authorList>
    </citation>
    <scope>FUNCTION</scope>
</reference>
<reference key="8">
    <citation type="journal article" date="2009" name="BMC Immunol.">
        <title>Identification of SH3 domain interaction partners of human FasL (CD178) by phage display screening.</title>
        <authorList>
            <person name="Voss M."/>
            <person name="Lettau M."/>
            <person name="Janssen O."/>
        </authorList>
    </citation>
    <scope>INTERACTION WITH FASLG</scope>
</reference>
<reference key="9">
    <citation type="journal article" date="2009" name="J. Biol. Chem.">
        <title>Sorting nexin 33 induces mammalian cell micronucleated phenotype and actin polymerization by interacting with Wiskott-Aldrich syndrome protein.</title>
        <authorList>
            <person name="Zhang J."/>
            <person name="Zhang X."/>
            <person name="Guo Y."/>
            <person name="Xu L."/>
            <person name="Pei D."/>
        </authorList>
    </citation>
    <scope>FUNCTION</scope>
    <scope>SUBCELLULAR LOCATION</scope>
    <scope>INTERACTION WITH WASL</scope>
</reference>
<reference key="10">
    <citation type="journal article" date="2009" name="J. Cell. Biochem.">
        <title>Alternative splicing of ADAM15 regulates its interactions with cellular SH3 proteins.</title>
        <authorList>
            <person name="Kleino I."/>
            <person name="Ortiz R.M."/>
            <person name="Yritys M."/>
            <person name="Huovila A.P."/>
            <person name="Saksela K."/>
        </authorList>
    </citation>
    <scope>INTERACTION WITH ADAM15</scope>
</reference>
<reference key="11">
    <citation type="journal article" date="2010" name="PLoS ONE">
        <title>The SNX-PX-BAR family in macropinocytosis: the regulation of macropinosome formation by SNX-PX-BAR proteins.</title>
        <authorList>
            <person name="Wang J.T."/>
            <person name="Kerr M.C."/>
            <person name="Karunaratne S."/>
            <person name="Jeanes A."/>
            <person name="Yap A.S."/>
            <person name="Teasdale R.D."/>
        </authorList>
    </citation>
    <scope>FUNCTION</scope>
    <scope>SUBCELLULAR LOCATION</scope>
</reference>
<reference key="12">
    <citation type="journal article" date="2011" name="Biochem. J.">
        <title>Specific amino acids in the BAR domain allow homodimerization and prevent heterodimerization of sorting nexin 33.</title>
        <authorList>
            <person name="Dislich B."/>
            <person name="Than M.E."/>
            <person name="Lichtenthaler S.F."/>
        </authorList>
    </citation>
    <scope>FUNCTION</scope>
    <scope>DOMAIN</scope>
    <scope>SUBCELLULAR LOCATION</scope>
    <scope>SUBUNIT</scope>
</reference>
<reference key="13">
    <citation type="journal article" date="2011" name="Sci. Signal.">
        <title>System-wide temporal characterization of the proteome and phosphoproteome of human embryonic stem cell differentiation.</title>
        <authorList>
            <person name="Rigbolt K.T."/>
            <person name="Prokhorova T.A."/>
            <person name="Akimov V."/>
            <person name="Henningsen J."/>
            <person name="Johansen P.T."/>
            <person name="Kratchmarova I."/>
            <person name="Kassem M."/>
            <person name="Mann M."/>
            <person name="Olsen J.V."/>
            <person name="Blagoev B."/>
        </authorList>
    </citation>
    <scope>IDENTIFICATION BY MASS SPECTROMETRY [LARGE SCALE ANALYSIS]</scope>
</reference>
<reference key="14">
    <citation type="journal article" date="2012" name="J. Cell Sci.">
        <title>SNX9, SNX18 and SNX33 are required for progression through and completion of mitosis.</title>
        <authorList>
            <person name="Ma M.P."/>
            <person name="Chircop M."/>
        </authorList>
    </citation>
    <scope>FUNCTION</scope>
    <scope>SUBCELLULAR LOCATION</scope>
</reference>
<reference key="15">
    <citation type="journal article" date="2013" name="J. Proteome Res.">
        <title>Toward a comprehensive characterization of a human cancer cell phosphoproteome.</title>
        <authorList>
            <person name="Zhou H."/>
            <person name="Di Palma S."/>
            <person name="Preisinger C."/>
            <person name="Peng M."/>
            <person name="Polat A.N."/>
            <person name="Heck A.J."/>
            <person name="Mohammed S."/>
        </authorList>
    </citation>
    <scope>PHOSPHORYLATION [LARGE SCALE ANALYSIS] AT SER-77 AND SER-92</scope>
    <scope>IDENTIFICATION BY MASS SPECTROMETRY [LARGE SCALE ANALYSIS]</scope>
    <source>
        <tissue>Cervix carcinoma</tissue>
        <tissue>Erythroleukemia</tissue>
    </source>
</reference>
<reference key="16">
    <citation type="submission" date="2012-12" db="PDB data bank">
        <title>Structure of human sorting nexin 33.</title>
        <authorList>
            <consortium name="Structural genomics consortium (SGC)"/>
        </authorList>
    </citation>
    <scope>X-RAY CRYSTALLOGRAPHY (2.65 ANGSTROMS) OF 212-574</scope>
</reference>
<organism>
    <name type="scientific">Homo sapiens</name>
    <name type="common">Human</name>
    <dbReference type="NCBI Taxonomy" id="9606"/>
    <lineage>
        <taxon>Eukaryota</taxon>
        <taxon>Metazoa</taxon>
        <taxon>Chordata</taxon>
        <taxon>Craniata</taxon>
        <taxon>Vertebrata</taxon>
        <taxon>Euteleostomi</taxon>
        <taxon>Mammalia</taxon>
        <taxon>Eutheria</taxon>
        <taxon>Euarchontoglires</taxon>
        <taxon>Primates</taxon>
        <taxon>Haplorrhini</taxon>
        <taxon>Catarrhini</taxon>
        <taxon>Hominidae</taxon>
        <taxon>Homo</taxon>
    </lineage>
</organism>
<sequence>MALKGRALYDFHSENKEEISIQQDEDLVIFSETSLDGWLQGQNSRGETGLFPASYVEIVRSGISTNHADYSSSPAGSPGAQVSLYNSPSVASPARSGGGSGFLSNQGSFEEDDDDDWDDWDDGCTVVEEPRAGGLGTNGHPPLNLSYPGAYPSQHMAFRPKPPLERQDSLASAKRGSVVGRNLNRFSCFVRSGVEAFILGDVPMMAKIAETYSIEMGPRGPQWKANPHPFACSVEDPTKQTKFKGIKSYISYKLTPTHAASPVYRRYKHFDWLYNRLLHKFTVISVPHLPEKQATGRFEEDFIEKRKRRLILWMDHMTSHPVLSQYEGFQHFLSCLDDKQWKMGKRRAEKDEMVGASFLLTFQIPTEHQDLQDVEDRVDTFKAFSKKMDDSVLQLSTVASELVRKHVGGFRKEFQKLGSAFQAISHSFQMDPPFCSEALNSAISHTGRTYEAIGEMFAEQPKNDLFQMLDTLSLYQGLLSNFPDIIHLQKGAFAKVKESQRMSDEGRMVQDEADGIRRRCRVVGFALQAEMNHFHQRRELDFKHMMQNYLRQQILFYQRVGQQLEKTLRMYDNL</sequence>
<gene>
    <name type="primary">SNX33</name>
    <name type="synonym">SH3PX3</name>
    <name type="synonym">SH3PXD3C</name>
    <name type="synonym">SNX30</name>
</gene>
<feature type="chain" id="PRO_0000311948" description="Sorting nexin-33">
    <location>
        <begin position="1"/>
        <end position="574"/>
    </location>
</feature>
<feature type="domain" description="SH3" evidence="3">
    <location>
        <begin position="1"/>
        <end position="61"/>
    </location>
</feature>
<feature type="domain" description="PX" evidence="2">
    <location>
        <begin position="230"/>
        <end position="340"/>
    </location>
</feature>
<feature type="domain" description="BAR">
    <location>
        <begin position="371"/>
        <end position="574"/>
    </location>
</feature>
<feature type="region of interest" description="Disordered" evidence="4">
    <location>
        <begin position="68"/>
        <end position="119"/>
    </location>
</feature>
<feature type="compositionally biased region" description="Acidic residues" evidence="4">
    <location>
        <begin position="109"/>
        <end position="119"/>
    </location>
</feature>
<feature type="modified residue" description="Phosphoserine" evidence="15 16">
    <location>
        <position position="77"/>
    </location>
</feature>
<feature type="modified residue" description="Phosphoserine" evidence="16">
    <location>
        <position position="92"/>
    </location>
</feature>
<feature type="strand" evidence="17">
    <location>
        <begin position="213"/>
        <end position="215"/>
    </location>
</feature>
<feature type="strand" evidence="17">
    <location>
        <begin position="220"/>
        <end position="223"/>
    </location>
</feature>
<feature type="strand" evidence="17">
    <location>
        <begin position="232"/>
        <end position="235"/>
    </location>
</feature>
<feature type="strand" evidence="17">
    <location>
        <begin position="252"/>
        <end position="256"/>
    </location>
</feature>
<feature type="strand" evidence="17">
    <location>
        <begin position="259"/>
        <end position="261"/>
    </location>
</feature>
<feature type="strand" evidence="17">
    <location>
        <begin position="263"/>
        <end position="265"/>
    </location>
</feature>
<feature type="helix" evidence="17">
    <location>
        <begin position="267"/>
        <end position="280"/>
    </location>
</feature>
<feature type="strand" evidence="17">
    <location>
        <begin position="282"/>
        <end position="284"/>
    </location>
</feature>
<feature type="turn" evidence="17">
    <location>
        <begin position="302"/>
        <end position="304"/>
    </location>
</feature>
<feature type="helix" evidence="17">
    <location>
        <begin position="305"/>
        <end position="318"/>
    </location>
</feature>
<feature type="helix" evidence="17">
    <location>
        <begin position="323"/>
        <end position="325"/>
    </location>
</feature>
<feature type="helix" evidence="17">
    <location>
        <begin position="327"/>
        <end position="333"/>
    </location>
</feature>
<feature type="helix" evidence="17">
    <location>
        <begin position="339"/>
        <end position="349"/>
    </location>
</feature>
<feature type="helix" evidence="17">
    <location>
        <begin position="355"/>
        <end position="360"/>
    </location>
</feature>
<feature type="helix" evidence="17">
    <location>
        <begin position="371"/>
        <end position="407"/>
    </location>
</feature>
<feature type="helix" evidence="17">
    <location>
        <begin position="409"/>
        <end position="427"/>
    </location>
</feature>
<feature type="helix" evidence="17">
    <location>
        <begin position="432"/>
        <end position="434"/>
    </location>
</feature>
<feature type="helix" evidence="17">
    <location>
        <begin position="437"/>
        <end position="459"/>
    </location>
</feature>
<feature type="helix" evidence="17">
    <location>
        <begin position="460"/>
        <end position="462"/>
    </location>
</feature>
<feature type="helix" evidence="17">
    <location>
        <begin position="465"/>
        <end position="504"/>
    </location>
</feature>
<feature type="helix" evidence="17">
    <location>
        <begin position="510"/>
        <end position="568"/>
    </location>
</feature>
<feature type="helix" evidence="17">
    <location>
        <begin position="569"/>
        <end position="571"/>
    </location>
</feature>
<comment type="function">
    <text evidence="6 7 8 11 12 13">Plays a role in the reorganization of the cytoskeleton, endocytosis and cellular vesicle trafficking via its interactions with membranes, WASL, DNM1 and DNM2. Acts both during interphase and at the end of mitotic cell divisions. Required for efficient progress through mitosis and cytokinesis. Required for normal formation of the cleavage furrow at the end of mitosis. Modulates endocytosis of cell-surface proteins, such as APP and PRNP; this then modulates the secretion of APP and PRNP peptides. Promotes membrane tubulation (in vitro). May promote the formation of macropinosomes.</text>
</comment>
<comment type="subunit">
    <text evidence="1 5 6 8 9 10 11">Homodimer (via BAR domain). Interacts with ADAM15. Interacts with FASLG. Interacts (via SH3 domain) with DNM1 and DNM2. Interacts with WASL. Interacts with FCHSD1 (via the F-BAR domain) (By similarity).</text>
</comment>
<comment type="interaction">
    <interactant intactId="EBI-2481535">
        <id>Q8WV41</id>
    </interactant>
    <interactant intactId="EBI-77818">
        <id>Q13444</id>
        <label>ADAM15</label>
    </interactant>
    <organismsDiffer>false</organismsDiffer>
    <experiments>4</experiments>
</comment>
<comment type="interaction">
    <interactant intactId="EBI-2481535">
        <id>Q8WV41</id>
    </interactant>
    <interactant intactId="EBI-12137265">
        <id>Q13444-2</id>
        <label>ADAM15</label>
    </interactant>
    <organismsDiffer>false</organismsDiffer>
    <experiments>3</experiments>
</comment>
<comment type="interaction">
    <interactant intactId="EBI-2481535">
        <id>Q8WV41</id>
    </interactant>
    <interactant intactId="EBI-77613">
        <id>P05067</id>
        <label>APP</label>
    </interactant>
    <organismsDiffer>false</organismsDiffer>
    <experiments>3</experiments>
</comment>
<comment type="interaction">
    <interactant intactId="EBI-2481535">
        <id>Q8WV41</id>
    </interactant>
    <interactant intactId="EBI-713135">
        <id>Q05193</id>
        <label>DNM1</label>
    </interactant>
    <organismsDiffer>false</organismsDiffer>
    <experiments>4</experiments>
</comment>
<comment type="interaction">
    <interactant intactId="EBI-2481535">
        <id>Q8WV41</id>
    </interactant>
    <interactant intactId="EBI-346547">
        <id>P50570</id>
        <label>DNM2</label>
    </interactant>
    <organismsDiffer>false</organismsDiffer>
    <experiments>4</experiments>
</comment>
<comment type="interaction">
    <interactant intactId="EBI-2481535">
        <id>Q8WV41</id>
    </interactant>
    <interactant intactId="EBI-10968534">
        <id>P50570-2</id>
        <label>DNM2</label>
    </interactant>
    <organismsDiffer>false</organismsDiffer>
    <experiments>3</experiments>
</comment>
<comment type="interaction">
    <interactant intactId="EBI-2481535">
        <id>Q8WV41</id>
    </interactant>
    <interactant intactId="EBI-710457">
        <id>Q7L190</id>
        <label>DPPA4</label>
    </interactant>
    <organismsDiffer>false</organismsDiffer>
    <experiments>5</experiments>
</comment>
<comment type="interaction">
    <interactant intactId="EBI-2481535">
        <id>Q8WV41</id>
    </interactant>
    <interactant intactId="EBI-495538">
        <id>P48023</id>
        <label>FASLG</label>
    </interactant>
    <organismsDiffer>false</organismsDiffer>
    <experiments>5</experiments>
</comment>
<comment type="interaction">
    <interactant intactId="EBI-2481535">
        <id>Q8WV41</id>
    </interactant>
    <interactant intactId="EBI-466029">
        <id>P42858</id>
        <label>HTT</label>
    </interactant>
    <organismsDiffer>false</organismsDiffer>
    <experiments>6</experiments>
</comment>
<comment type="interaction">
    <interactant intactId="EBI-2481535">
        <id>Q8WV41</id>
    </interactant>
    <interactant intactId="EBI-399080">
        <id>Q92993</id>
        <label>KAT5</label>
    </interactant>
    <organismsDiffer>false</organismsDiffer>
    <experiments>3</experiments>
</comment>
<comment type="interaction">
    <interactant intactId="EBI-2481535">
        <id>Q8WV41</id>
    </interactant>
    <interactant intactId="EBI-11742507">
        <id>Q8TAP4-4</id>
        <label>LMO3</label>
    </interactant>
    <organismsDiffer>false</organismsDiffer>
    <experiments>3</experiments>
</comment>
<comment type="interaction">
    <interactant intactId="EBI-2481535">
        <id>Q8WV41</id>
    </interactant>
    <interactant intactId="EBI-747693">
        <id>P41227</id>
        <label>NAA10</label>
    </interactant>
    <organismsDiffer>false</organismsDiffer>
    <experiments>3</experiments>
</comment>
<comment type="interaction">
    <interactant intactId="EBI-2481535">
        <id>Q8WV41</id>
    </interactant>
    <interactant intactId="EBI-2515597">
        <id>Q96HR8</id>
        <label>NAF1</label>
    </interactant>
    <organismsDiffer>false</organismsDiffer>
    <experiments>4</experiments>
</comment>
<comment type="interaction">
    <interactant intactId="EBI-2481535">
        <id>Q8WV41</id>
    </interactant>
    <interactant intactId="EBI-9090795">
        <id>Q15047-2</id>
        <label>SETDB1</label>
    </interactant>
    <organismsDiffer>false</organismsDiffer>
    <experiments>3</experiments>
</comment>
<comment type="interaction">
    <interactant intactId="EBI-2481535">
        <id>Q8WV41</id>
    </interactant>
    <interactant intactId="EBI-2481535">
        <id>Q8WV41</id>
        <label>SNX33</label>
    </interactant>
    <organismsDiffer>false</organismsDiffer>
    <experiments>2</experiments>
</comment>
<comment type="interaction">
    <interactant intactId="EBI-2481535">
        <id>Q8WV41</id>
    </interactant>
    <interactant intactId="EBI-77848">
        <id>Q9Y5X1</id>
        <label>SNX9</label>
    </interactant>
    <organismsDiffer>false</organismsDiffer>
    <experiments>2</experiments>
</comment>
<comment type="interaction">
    <interactant intactId="EBI-2481535">
        <id>Q8WV41</id>
    </interactant>
    <interactant intactId="EBI-346375">
        <id>P42768</id>
        <label>WAS</label>
    </interactant>
    <organismsDiffer>false</organismsDiffer>
    <experiments>3</experiments>
</comment>
<comment type="interaction">
    <interactant intactId="EBI-2481535">
        <id>Q8WV41</id>
    </interactant>
    <interactant intactId="EBI-359832">
        <id>P61981</id>
        <label>YWHAG</label>
    </interactant>
    <organismsDiffer>false</organismsDiffer>
    <experiments>6</experiments>
</comment>
<comment type="interaction">
    <interactant intactId="EBI-2481535">
        <id>Q8WV41</id>
    </interactant>
    <interactant intactId="EBI-14069183">
        <id>Q86XF7</id>
        <label>ZNF575</label>
    </interactant>
    <organismsDiffer>false</organismsDiffer>
    <experiments>3</experiments>
</comment>
<comment type="subcellular location">
    <subcellularLocation>
        <location>Cytoplasm</location>
        <location>Cytosol</location>
    </subcellularLocation>
    <subcellularLocation>
        <location>Membrane</location>
        <topology>Peripheral membrane protein</topology>
        <orientation>Cytoplasmic side</orientation>
    </subcellularLocation>
    <subcellularLocation>
        <location>Cytoplasmic vesicle membrane</location>
        <topology>Peripheral membrane protein</topology>
        <orientation>Cytoplasmic side</orientation>
    </subcellularLocation>
    <text evidence="6 12">Primarily cytosolic, but a minor proportion is membrane-bound (PubMed:18353773). Not associated with membranes (PubMed:21048941).</text>
</comment>
<comment type="tissue specificity">
    <text evidence="6">Detected in heart and pancreas.</text>
</comment>
<comment type="domain">
    <text evidence="11">The PX and BAR domains mediate association with membranes and are required for membrane tubulation.</text>
</comment>
<comment type="PTM">
    <text evidence="6">Phosphorylated.</text>
</comment>
<comment type="similarity">
    <text evidence="14">Belongs to the sorting nexin family.</text>
</comment>
<keyword id="KW-0002">3D-structure</keyword>
<keyword id="KW-0131">Cell cycle</keyword>
<keyword id="KW-0132">Cell division</keyword>
<keyword id="KW-0963">Cytoplasm</keyword>
<keyword id="KW-0968">Cytoplasmic vesicle</keyword>
<keyword id="KW-0254">Endocytosis</keyword>
<keyword id="KW-0472">Membrane</keyword>
<keyword id="KW-0498">Mitosis</keyword>
<keyword id="KW-0597">Phosphoprotein</keyword>
<keyword id="KW-0653">Protein transport</keyword>
<keyword id="KW-1267">Proteomics identification</keyword>
<keyword id="KW-1185">Reference proteome</keyword>
<keyword id="KW-0728">SH3 domain</keyword>
<keyword id="KW-0813">Transport</keyword>
<proteinExistence type="evidence at protein level"/>
<evidence type="ECO:0000250" key="1">
    <source>
        <dbReference type="UniProtKB" id="Q4VAA7"/>
    </source>
</evidence>
<evidence type="ECO:0000255" key="2">
    <source>
        <dbReference type="PROSITE-ProRule" id="PRU00147"/>
    </source>
</evidence>
<evidence type="ECO:0000255" key="3">
    <source>
        <dbReference type="PROSITE-ProRule" id="PRU00192"/>
    </source>
</evidence>
<evidence type="ECO:0000256" key="4">
    <source>
        <dbReference type="SAM" id="MobiDB-lite"/>
    </source>
</evidence>
<evidence type="ECO:0000269" key="5">
    <source>
    </source>
</evidence>
<evidence type="ECO:0000269" key="6">
    <source>
    </source>
</evidence>
<evidence type="ECO:0000269" key="7">
    <source>
    </source>
</evidence>
<evidence type="ECO:0000269" key="8">
    <source>
    </source>
</evidence>
<evidence type="ECO:0000269" key="9">
    <source>
    </source>
</evidence>
<evidence type="ECO:0000269" key="10">
    <source>
    </source>
</evidence>
<evidence type="ECO:0000269" key="11">
    <source>
    </source>
</evidence>
<evidence type="ECO:0000269" key="12">
    <source>
    </source>
</evidence>
<evidence type="ECO:0000269" key="13">
    <source>
    </source>
</evidence>
<evidence type="ECO:0000305" key="14"/>
<evidence type="ECO:0007744" key="15">
    <source>
    </source>
</evidence>
<evidence type="ECO:0007744" key="16">
    <source>
    </source>
</evidence>
<evidence type="ECO:0007829" key="17">
    <source>
        <dbReference type="PDB" id="4AKV"/>
    </source>
</evidence>
<protein>
    <recommendedName>
        <fullName>Sorting nexin-33</fullName>
    </recommendedName>
    <alternativeName>
        <fullName>SH3 and PX domain-containing protein 3</fullName>
    </alternativeName>
</protein>
<name>SNX33_HUMAN</name>